<keyword id="KW-0002">3D-structure</keyword>
<keyword id="KW-0025">Alternative splicing</keyword>
<keyword id="KW-0963">Cytoplasm</keyword>
<keyword id="KW-0320">Glycogen biosynthesis</keyword>
<keyword id="KW-0325">Glycoprotein</keyword>
<keyword id="KW-0464">Manganese</keyword>
<keyword id="KW-0479">Metal-binding</keyword>
<keyword id="KW-0539">Nucleus</keyword>
<keyword id="KW-1185">Reference proteome</keyword>
<keyword id="KW-0808">Transferase</keyword>
<reference evidence="10" key="1">
    <citation type="journal article" date="1998" name="Science">
        <title>Genome sequence of the nematode C. elegans: a platform for investigating biology.</title>
        <authorList>
            <consortium name="The C. elegans sequencing consortium"/>
        </authorList>
    </citation>
    <scope>NUCLEOTIDE SEQUENCE [LARGE SCALE GENOMIC DNA]</scope>
    <scope>ALTERNATIVE SPLICING</scope>
    <source>
        <strain evidence="10">Bristol N2</strain>
    </source>
</reference>
<reference evidence="9" key="2">
    <citation type="journal article" date="2014" name="Proc. Natl. Acad. Sci. U.S.A.">
        <title>Structural basis for the recruitment of glycogen synthase by glycogenin.</title>
        <authorList>
            <person name="Zeqiraj E."/>
            <person name="Tang X."/>
            <person name="Hunter R.W."/>
            <person name="Garcia-Rocha M."/>
            <person name="Judd A."/>
            <person name="Deak M."/>
            <person name="von Wilamowitz-Moellendorff A."/>
            <person name="Kurinov I."/>
            <person name="Guinovart J.J."/>
            <person name="Tyers M."/>
            <person name="Sakamoto K."/>
            <person name="Sicheri F."/>
        </authorList>
    </citation>
    <scope>X-RAY CRYSTALLOGRAPHY (2.60 ANGSTROMS) OF 394-429 IN COMPLEX WITH GYS-1</scope>
    <scope>PATHWAY</scope>
    <scope>SUBUNIT</scope>
    <scope>DOMAIN</scope>
    <scope>GLYCOSYLATION</scope>
    <scope>MUTAGENESIS OF TYR-194; ARG-400; TRP-403; TYR-410; PHE-416; ILE-419; LEU-423 AND LEU-427</scope>
</reference>
<dbReference type="EC" id="2.4.1.186" evidence="2"/>
<dbReference type="EMBL" id="FO080515">
    <property type="protein sequence ID" value="CCD64318.1"/>
    <property type="molecule type" value="Genomic_DNA"/>
</dbReference>
<dbReference type="EMBL" id="FO080515">
    <property type="protein sequence ID" value="CCD64319.1"/>
    <property type="molecule type" value="Genomic_DNA"/>
</dbReference>
<dbReference type="EMBL" id="FO080515">
    <property type="protein sequence ID" value="CCD64320.1"/>
    <property type="molecule type" value="Genomic_DNA"/>
</dbReference>
<dbReference type="RefSeq" id="NP_508608.1">
    <molecule id="H2KYQ5-1"/>
    <property type="nucleotide sequence ID" value="NM_076207.8"/>
</dbReference>
<dbReference type="RefSeq" id="NP_508609.1">
    <molecule id="H2KYQ5-2"/>
    <property type="nucleotide sequence ID" value="NM_076208.7"/>
</dbReference>
<dbReference type="RefSeq" id="NP_741749.1">
    <molecule id="H2KYQ5-3"/>
    <property type="nucleotide sequence ID" value="NM_171944.9"/>
</dbReference>
<dbReference type="PDB" id="4QLB">
    <property type="method" value="X-ray"/>
    <property type="resolution" value="2.60 A"/>
    <property type="chains" value="E/F/G/H=394-429"/>
</dbReference>
<dbReference type="PDBsum" id="4QLB"/>
<dbReference type="SMR" id="H2KYQ5"/>
<dbReference type="ComplexPortal" id="CPX-3523">
    <property type="entry name" value="Glycogen synthase-Glycogenin complex"/>
</dbReference>
<dbReference type="FunCoup" id="H2KYQ5">
    <property type="interactions" value="69"/>
</dbReference>
<dbReference type="IntAct" id="H2KYQ5">
    <property type="interactions" value="1"/>
</dbReference>
<dbReference type="STRING" id="6239.F56B6.4a.1"/>
<dbReference type="CAZy" id="GT8">
    <property type="family name" value="Glycosyltransferase Family 8"/>
</dbReference>
<dbReference type="GlyCosmos" id="H2KYQ5">
    <property type="glycosylation" value="1 site, No reported glycans"/>
</dbReference>
<dbReference type="PaxDb" id="6239-F56B6.4a"/>
<dbReference type="EnsemblMetazoa" id="F56B6.4a.1">
    <molecule id="H2KYQ5-1"/>
    <property type="protein sequence ID" value="F56B6.4a.1"/>
    <property type="gene ID" value="WBGene00006863"/>
</dbReference>
<dbReference type="EnsemblMetazoa" id="F56B6.4b.1">
    <molecule id="H2KYQ5-2"/>
    <property type="protein sequence ID" value="F56B6.4b.1"/>
    <property type="gene ID" value="WBGene00006863"/>
</dbReference>
<dbReference type="EnsemblMetazoa" id="F56B6.4c.1">
    <molecule id="H2KYQ5-3"/>
    <property type="protein sequence ID" value="F56B6.4c.1"/>
    <property type="gene ID" value="WBGene00006863"/>
</dbReference>
<dbReference type="GeneID" id="180644"/>
<dbReference type="KEGG" id="cel:CELE_F56B6.4"/>
<dbReference type="UCSC" id="F56B6.4c">
    <property type="organism name" value="c. elegans"/>
</dbReference>
<dbReference type="AGR" id="WB:WBGene00006863"/>
<dbReference type="CTD" id="180644"/>
<dbReference type="WormBase" id="F56B6.4a">
    <molecule id="H2KYQ5-1"/>
    <property type="protein sequence ID" value="CE04664"/>
    <property type="gene ID" value="WBGene00006863"/>
    <property type="gene designation" value="gyg-1"/>
</dbReference>
<dbReference type="WormBase" id="F56B6.4b">
    <molecule id="H2KYQ5-2"/>
    <property type="protein sequence ID" value="CE29405"/>
    <property type="gene ID" value="WBGene00006863"/>
    <property type="gene designation" value="gyg-1"/>
</dbReference>
<dbReference type="WormBase" id="F56B6.4c">
    <molecule id="H2KYQ5-3"/>
    <property type="protein sequence ID" value="CE31185"/>
    <property type="gene ID" value="WBGene00006863"/>
    <property type="gene designation" value="gyg-1"/>
</dbReference>
<dbReference type="eggNOG" id="KOG1950">
    <property type="taxonomic scope" value="Eukaryota"/>
</dbReference>
<dbReference type="GeneTree" id="ENSGT00940000175485"/>
<dbReference type="HOGENOM" id="CLU_017171_3_1_1"/>
<dbReference type="InParanoid" id="H2KYQ5"/>
<dbReference type="OMA" id="AFVHIQE"/>
<dbReference type="OrthoDB" id="2014201at2759"/>
<dbReference type="PhylomeDB" id="H2KYQ5"/>
<dbReference type="Reactome" id="R-CEL-3322077">
    <property type="pathway name" value="Glycogen synthesis"/>
</dbReference>
<dbReference type="Reactome" id="R-CEL-6798695">
    <property type="pathway name" value="Neutrophil degranulation"/>
</dbReference>
<dbReference type="Reactome" id="R-CEL-70221">
    <property type="pathway name" value="Glycogen breakdown (glycogenolysis)"/>
</dbReference>
<dbReference type="UniPathway" id="UPA00164"/>
<dbReference type="EvolutionaryTrace" id="H2KYQ5"/>
<dbReference type="PRO" id="PR:H2KYQ5"/>
<dbReference type="Proteomes" id="UP000001940">
    <property type="component" value="Chromosome X"/>
</dbReference>
<dbReference type="Bgee" id="WBGene00006863">
    <property type="expression patterns" value="Expressed in larva and 3 other cell types or tissues"/>
</dbReference>
<dbReference type="GO" id="GO:0005737">
    <property type="term" value="C:cytoplasm"/>
    <property type="evidence" value="ECO:0000314"/>
    <property type="project" value="ComplexPortal"/>
</dbReference>
<dbReference type="GO" id="GO:0005634">
    <property type="term" value="C:nucleus"/>
    <property type="evidence" value="ECO:0007669"/>
    <property type="project" value="UniProtKB-SubCell"/>
</dbReference>
<dbReference type="GO" id="GO:0055120">
    <property type="term" value="C:striated muscle dense body"/>
    <property type="evidence" value="ECO:0007005"/>
    <property type="project" value="WormBase"/>
</dbReference>
<dbReference type="GO" id="GO:0008466">
    <property type="term" value="F:glycogenin glucosyltransferase activity"/>
    <property type="evidence" value="ECO:0007669"/>
    <property type="project" value="UniProtKB-EC"/>
</dbReference>
<dbReference type="GO" id="GO:0016757">
    <property type="term" value="F:glycosyltransferase activity"/>
    <property type="evidence" value="ECO:0000318"/>
    <property type="project" value="GO_Central"/>
</dbReference>
<dbReference type="GO" id="GO:0046872">
    <property type="term" value="F:metal ion binding"/>
    <property type="evidence" value="ECO:0007669"/>
    <property type="project" value="UniProtKB-KW"/>
</dbReference>
<dbReference type="GO" id="GO:0005978">
    <property type="term" value="P:glycogen biosynthetic process"/>
    <property type="evidence" value="ECO:0000314"/>
    <property type="project" value="ComplexPortal"/>
</dbReference>
<dbReference type="CDD" id="cd02537">
    <property type="entry name" value="GT8_Glycogenin"/>
    <property type="match status" value="1"/>
</dbReference>
<dbReference type="FunFam" id="3.90.550.10:FF:000092">
    <property type="entry name" value="Glycogenin 2"/>
    <property type="match status" value="1"/>
</dbReference>
<dbReference type="Gene3D" id="3.90.550.10">
    <property type="entry name" value="Spore Coat Polysaccharide Biosynthesis Protein SpsA, Chain A"/>
    <property type="match status" value="1"/>
</dbReference>
<dbReference type="InterPro" id="IPR002495">
    <property type="entry name" value="Glyco_trans_8"/>
</dbReference>
<dbReference type="InterPro" id="IPR050587">
    <property type="entry name" value="GNT1/Glycosyltrans_8"/>
</dbReference>
<dbReference type="InterPro" id="IPR029044">
    <property type="entry name" value="Nucleotide-diphossugar_trans"/>
</dbReference>
<dbReference type="PANTHER" id="PTHR11183">
    <property type="entry name" value="GLYCOGENIN SUBFAMILY MEMBER"/>
    <property type="match status" value="1"/>
</dbReference>
<dbReference type="Pfam" id="PF01501">
    <property type="entry name" value="Glyco_transf_8"/>
    <property type="match status" value="1"/>
</dbReference>
<dbReference type="SUPFAM" id="SSF53448">
    <property type="entry name" value="Nucleotide-diphospho-sugar transferases"/>
    <property type="match status" value="1"/>
</dbReference>
<sequence>MSEAWITLATNDNYAQGALVLVHSLRTAGTTRKIHCLISNEVSAPVRKQLEEHFDDVSIVDVFNSNDSDNLRLIERPDLGVTFTKLHCWRLTQYTKCVFLDADTLVLRNADELFTRPDFSAASDIGWPDSFNSGVFVYVPNNETYRQLVDFAVTHGSYDGGDQGLLNDFFSNWRDLPSEHRLPFIYNMTAGAFYTYAAAYKRYGANTKIVHFIGSVKPWHGSAAVHTGEHFQQWQKIYHAHVNHTSRTNEHAAVFPSHHHTPEHRSHSADHPKIERKDSIVREIGNFVMHVVQSVNILPSYDTDANTSDSHRNNEPHKHDQQREEHHELPHNKFQTPHEESQDIVGSTDCFGSQMPKYNADSETDREVEQITNNTPCPAFVPFERREEYQAASPSTEERRAAWEAGQPDYLGRDAFVHIQEALNRALNE</sequence>
<comment type="function">
    <text evidence="5">Self-glucosylating initiator of glycogen synthesis (PubMed:24982189). It catalyzes the formation of a short alpha (1,4)-glucosyl chain covalently attached via a glucose 1-O-tyrosyl linkage to internal tyrosine residues and these chains act as primers for the elongation reaction catalyzed by glycogen synthase (PubMed:24982189).</text>
</comment>
<comment type="catalytic activity">
    <reaction evidence="5">
        <text>L-tyrosyl-[glycogenin] + UDP-alpha-D-glucose = alpha-D-glucosyl-L-tyrosyl-[glycogenin] + UDP + H(+)</text>
        <dbReference type="Rhea" id="RHEA:23360"/>
        <dbReference type="Rhea" id="RHEA-COMP:14604"/>
        <dbReference type="Rhea" id="RHEA-COMP:14605"/>
        <dbReference type="ChEBI" id="CHEBI:15378"/>
        <dbReference type="ChEBI" id="CHEBI:46858"/>
        <dbReference type="ChEBI" id="CHEBI:58223"/>
        <dbReference type="ChEBI" id="CHEBI:58885"/>
        <dbReference type="ChEBI" id="CHEBI:140573"/>
        <dbReference type="EC" id="2.4.1.186"/>
    </reaction>
</comment>
<comment type="catalytic activity">
    <reaction evidence="5">
        <text>[1,4-alpha-D-glucosyl](n)-L-tyrosyl-[glycogenin] + UDP-alpha-D-glucose = [1,4-alpha-D-glucosyl](n+1)-L-tyrosyl-[glycogenin] + UDP + H(+)</text>
        <dbReference type="Rhea" id="RHEA:56560"/>
        <dbReference type="Rhea" id="RHEA-COMP:14606"/>
        <dbReference type="Rhea" id="RHEA-COMP:14607"/>
        <dbReference type="ChEBI" id="CHEBI:15378"/>
        <dbReference type="ChEBI" id="CHEBI:58223"/>
        <dbReference type="ChEBI" id="CHEBI:58885"/>
        <dbReference type="ChEBI" id="CHEBI:140574"/>
        <dbReference type="EC" id="2.4.1.186"/>
    </reaction>
</comment>
<comment type="cofactor">
    <cofactor evidence="2">
        <name>Mn(2+)</name>
        <dbReference type="ChEBI" id="CHEBI:29035"/>
    </cofactor>
    <text evidence="2">Divalent metal ions. Required for self-glucosylation. Manganese is the most effective.</text>
</comment>
<comment type="pathway">
    <text evidence="5">Glycan biosynthesis; glycogen biosynthesis.</text>
</comment>
<comment type="subunit">
    <text evidence="5">Forms a heterooctamer with one molecule of gyg-1 bound to each protomer of the gys-1 homotetramer. The N-terminus of gys-1 is involved in interprotomer contacts with gyg-1. The interaction with gys-1 is required for glycogen production but is not required for gys-1 intrinsic activity.</text>
</comment>
<comment type="subcellular location">
    <subcellularLocation>
        <location evidence="2">Cytoplasm</location>
    </subcellularLocation>
    <subcellularLocation>
        <location evidence="2">Nucleus</location>
    </subcellularLocation>
    <text evidence="1">Localizes to glycogen granules (glycosomes) in the cytoplasm.</text>
</comment>
<comment type="alternative products">
    <event type="alternative splicing"/>
    <isoform>
        <id>H2KYQ5-1</id>
        <name evidence="11">a</name>
        <sequence type="displayed"/>
    </isoform>
    <isoform>
        <id>H2KYQ5-2</id>
        <name evidence="12">b</name>
        <sequence type="described" ref="VSP_057309"/>
    </isoform>
    <isoform>
        <id>H2KYQ5-3</id>
        <name evidence="13">c</name>
        <sequence type="described" ref="VSP_057310"/>
    </isoform>
</comment>
<comment type="domain">
    <text evidence="5">The length of the linker region between residues 387-394 which separates two alpha-helices regulates the size of the glycogen particles synthesized but plays no role in the interaction with gsy-1.</text>
</comment>
<comment type="PTM">
    <text evidence="2">Self-glycosylated by the transfer of glucose residues from UDP-glucose to itself, forming an alpha-1,4-glycan of around 10 residues attached to Tyr-194.</text>
</comment>
<comment type="similarity">
    <text evidence="7">Belongs to the glycosyltransferase 8 family. Glycogenin subfamily.</text>
</comment>
<organism evidence="10">
    <name type="scientific">Caenorhabditis elegans</name>
    <dbReference type="NCBI Taxonomy" id="6239"/>
    <lineage>
        <taxon>Eukaryota</taxon>
        <taxon>Metazoa</taxon>
        <taxon>Ecdysozoa</taxon>
        <taxon>Nematoda</taxon>
        <taxon>Chromadorea</taxon>
        <taxon>Rhabditida</taxon>
        <taxon>Rhabditina</taxon>
        <taxon>Rhabditomorpha</taxon>
        <taxon>Rhabditoidea</taxon>
        <taxon>Rhabditidae</taxon>
        <taxon>Peloderinae</taxon>
        <taxon>Caenorhabditis</taxon>
    </lineage>
</organism>
<proteinExistence type="evidence at protein level"/>
<evidence type="ECO:0000250" key="1">
    <source>
        <dbReference type="UniProtKB" id="C4R941"/>
    </source>
</evidence>
<evidence type="ECO:0000250" key="2">
    <source>
        <dbReference type="UniProtKB" id="P13280"/>
    </source>
</evidence>
<evidence type="ECO:0000250" key="3">
    <source>
        <dbReference type="UniProtKB" id="P46976"/>
    </source>
</evidence>
<evidence type="ECO:0000256" key="4">
    <source>
        <dbReference type="SAM" id="MobiDB-lite"/>
    </source>
</evidence>
<evidence type="ECO:0000269" key="5">
    <source>
    </source>
</evidence>
<evidence type="ECO:0000303" key="6">
    <source>
    </source>
</evidence>
<evidence type="ECO:0000305" key="7"/>
<evidence type="ECO:0000305" key="8">
    <source>
    </source>
</evidence>
<evidence type="ECO:0000312" key="9">
    <source>
        <dbReference type="PDB" id="4QLB"/>
    </source>
</evidence>
<evidence type="ECO:0000312" key="10">
    <source>
        <dbReference type="Proteomes" id="UP000001940"/>
    </source>
</evidence>
<evidence type="ECO:0000312" key="11">
    <source>
        <dbReference type="WormBase" id="F56B6.4a"/>
    </source>
</evidence>
<evidence type="ECO:0000312" key="12">
    <source>
        <dbReference type="WormBase" id="F56B6.4b"/>
    </source>
</evidence>
<evidence type="ECO:0000312" key="13">
    <source>
        <dbReference type="WormBase" id="F56B6.4c"/>
    </source>
</evidence>
<evidence type="ECO:0007829" key="14">
    <source>
        <dbReference type="PDB" id="4QLB"/>
    </source>
</evidence>
<accession>H2KYQ5</accession>
<accession>H2KYQ6</accession>
<accession>Q95Q50</accession>
<name>GYG1_CAEEL</name>
<protein>
    <recommendedName>
        <fullName evidence="11">Glycogenin-1</fullName>
        <shortName evidence="6">GN</shortName>
        <ecNumber evidence="2">2.4.1.186</ecNumber>
    </recommendedName>
</protein>
<feature type="chain" id="PRO_0000431509" description="Glycogenin-1" evidence="7">
    <location>
        <begin position="1"/>
        <end position="429"/>
    </location>
</feature>
<feature type="region of interest" description="Disordered" evidence="4">
    <location>
        <begin position="254"/>
        <end position="274"/>
    </location>
</feature>
<feature type="region of interest" description="Disordered" evidence="4">
    <location>
        <begin position="300"/>
        <end position="338"/>
    </location>
</feature>
<feature type="compositionally biased region" description="Basic and acidic residues" evidence="4">
    <location>
        <begin position="263"/>
        <end position="274"/>
    </location>
</feature>
<feature type="compositionally biased region" description="Basic and acidic residues" evidence="4">
    <location>
        <begin position="309"/>
        <end position="338"/>
    </location>
</feature>
<feature type="binding site" evidence="3">
    <location>
        <position position="8"/>
    </location>
    <ligand>
        <name>UDP</name>
        <dbReference type="ChEBI" id="CHEBI:58223"/>
    </ligand>
</feature>
<feature type="binding site" evidence="3">
    <location>
        <position position="8"/>
    </location>
    <ligand>
        <name>UDP-alpha-D-glucose</name>
        <dbReference type="ChEBI" id="CHEBI:58885"/>
    </ligand>
</feature>
<feature type="binding site" evidence="3">
    <location>
        <position position="10"/>
    </location>
    <ligand>
        <name>UDP</name>
        <dbReference type="ChEBI" id="CHEBI:58223"/>
    </ligand>
</feature>
<feature type="binding site" evidence="3">
    <location>
        <position position="10"/>
    </location>
    <ligand>
        <name>UDP-alpha-D-glucose</name>
        <dbReference type="ChEBI" id="CHEBI:58885"/>
    </ligand>
</feature>
<feature type="binding site" evidence="3">
    <location>
        <position position="11"/>
    </location>
    <ligand>
        <name>UDP</name>
        <dbReference type="ChEBI" id="CHEBI:58223"/>
    </ligand>
</feature>
<feature type="binding site" evidence="2">
    <location>
        <position position="11"/>
    </location>
    <ligand>
        <name>UDP-alpha-D-glucose</name>
        <dbReference type="ChEBI" id="CHEBI:58885"/>
    </ligand>
</feature>
<feature type="binding site" evidence="3">
    <location>
        <position position="14"/>
    </location>
    <ligand>
        <name>UDP</name>
        <dbReference type="ChEBI" id="CHEBI:58223"/>
    </ligand>
</feature>
<feature type="binding site" evidence="3">
    <location>
        <position position="14"/>
    </location>
    <ligand>
        <name>UDP-alpha-D-glucose</name>
        <dbReference type="ChEBI" id="CHEBI:58885"/>
    </ligand>
</feature>
<feature type="binding site" evidence="3">
    <location>
        <position position="76"/>
    </location>
    <ligand>
        <name>UDP</name>
        <dbReference type="ChEBI" id="CHEBI:58223"/>
    </ligand>
</feature>
<feature type="binding site" evidence="3">
    <location>
        <position position="76"/>
    </location>
    <ligand>
        <name>UDP-alpha-D-glucose</name>
        <dbReference type="ChEBI" id="CHEBI:58885"/>
    </ligand>
</feature>
<feature type="binding site" evidence="3">
    <location>
        <position position="85"/>
    </location>
    <ligand>
        <name>UDP-alpha-D-glucose</name>
        <dbReference type="ChEBI" id="CHEBI:58885"/>
    </ligand>
</feature>
<feature type="binding site" evidence="3">
    <location>
        <position position="101"/>
    </location>
    <ligand>
        <name>Mn(2+)</name>
        <dbReference type="ChEBI" id="CHEBI:29035"/>
    </ligand>
</feature>
<feature type="binding site" evidence="2">
    <location>
        <position position="101"/>
    </location>
    <ligand>
        <name>UDP</name>
        <dbReference type="ChEBI" id="CHEBI:58223"/>
    </ligand>
</feature>
<feature type="binding site" evidence="3">
    <location>
        <position position="101"/>
    </location>
    <ligand>
        <name>UDP-alpha-D-glucose</name>
        <dbReference type="ChEBI" id="CHEBI:58885"/>
    </ligand>
</feature>
<feature type="binding site" evidence="3">
    <location>
        <position position="102"/>
    </location>
    <ligand>
        <name>UDP</name>
        <dbReference type="ChEBI" id="CHEBI:58223"/>
    </ligand>
</feature>
<feature type="binding site" evidence="3">
    <location>
        <position position="102"/>
    </location>
    <ligand>
        <name>UDP-alpha-D-glucose</name>
        <dbReference type="ChEBI" id="CHEBI:58885"/>
    </ligand>
</feature>
<feature type="binding site" evidence="3">
    <location>
        <position position="103"/>
    </location>
    <ligand>
        <name>Mn(2+)</name>
        <dbReference type="ChEBI" id="CHEBI:29035"/>
    </ligand>
</feature>
<feature type="binding site" evidence="3">
    <location>
        <position position="103"/>
    </location>
    <ligand>
        <name>UDP</name>
        <dbReference type="ChEBI" id="CHEBI:58223"/>
    </ligand>
</feature>
<feature type="binding site" evidence="3">
    <location>
        <position position="103"/>
    </location>
    <ligand>
        <name>UDP-alpha-D-glucose</name>
        <dbReference type="ChEBI" id="CHEBI:58885"/>
    </ligand>
</feature>
<feature type="binding site" evidence="3">
    <location>
        <position position="132"/>
    </location>
    <ligand>
        <name>UDP-alpha-D-glucose</name>
        <dbReference type="ChEBI" id="CHEBI:58885"/>
    </ligand>
</feature>
<feature type="binding site" evidence="3">
    <location>
        <position position="133"/>
    </location>
    <ligand>
        <name>UDP-alpha-D-glucose</name>
        <dbReference type="ChEBI" id="CHEBI:58885"/>
    </ligand>
</feature>
<feature type="binding site" evidence="3">
    <location>
        <position position="159"/>
    </location>
    <ligand>
        <name>UDP-alpha-D-glucose</name>
        <dbReference type="ChEBI" id="CHEBI:58885"/>
    </ligand>
</feature>
<feature type="binding site" evidence="3">
    <location>
        <position position="162"/>
    </location>
    <ligand>
        <name>UDP-alpha-D-glucose</name>
        <dbReference type="ChEBI" id="CHEBI:58885"/>
    </ligand>
</feature>
<feature type="binding site" evidence="3">
    <location>
        <position position="163"/>
    </location>
    <ligand>
        <name>UDP-alpha-D-glucose</name>
        <dbReference type="ChEBI" id="CHEBI:58885"/>
    </ligand>
</feature>
<feature type="binding site" evidence="3">
    <location>
        <position position="211"/>
    </location>
    <ligand>
        <name>Mn(2+)</name>
        <dbReference type="ChEBI" id="CHEBI:29035"/>
    </ligand>
</feature>
<feature type="binding site" evidence="2">
    <location>
        <position position="211"/>
    </location>
    <ligand>
        <name>UDP</name>
        <dbReference type="ChEBI" id="CHEBI:58223"/>
    </ligand>
</feature>
<feature type="binding site" evidence="3">
    <location>
        <position position="214"/>
    </location>
    <ligand>
        <name>UDP</name>
        <dbReference type="ChEBI" id="CHEBI:58223"/>
    </ligand>
</feature>
<feature type="binding site" evidence="3">
    <location>
        <position position="214"/>
    </location>
    <ligand>
        <name>UDP-alpha-D-glucose</name>
        <dbReference type="ChEBI" id="CHEBI:58885"/>
    </ligand>
</feature>
<feature type="binding site" evidence="3">
    <location>
        <position position="217"/>
    </location>
    <ligand>
        <name>UDP</name>
        <dbReference type="ChEBI" id="CHEBI:58223"/>
    </ligand>
</feature>
<feature type="binding site" evidence="3">
    <location>
        <position position="217"/>
    </location>
    <ligand>
        <name>UDP-alpha-D-glucose</name>
        <dbReference type="ChEBI" id="CHEBI:58885"/>
    </ligand>
</feature>
<feature type="site" description="Important for catalytic activity" evidence="2">
    <location>
        <position position="85"/>
    </location>
</feature>
<feature type="glycosylation site" description="O-linked (Glc...) tyrosine" evidence="8">
    <location>
        <position position="194"/>
    </location>
</feature>
<feature type="splice variant" id="VSP_057309" description="In isoform b." evidence="7">
    <location>
        <begin position="246"/>
        <end position="390"/>
    </location>
</feature>
<feature type="splice variant" id="VSP_057310" description="In isoform c." evidence="7">
    <location>
        <begin position="246"/>
        <end position="371"/>
    </location>
</feature>
<feature type="mutagenesis site" description="Loss of auto-glucosylation. No effect on interaction with gsy-1 but loss of gsy-1 function." evidence="5">
    <original>Y</original>
    <variation>P</variation>
    <location>
        <position position="194"/>
    </location>
</feature>
<feature type="mutagenesis site" description="Loss of interaction with gsy-1. Partial loss of gsy-1 function." evidence="5">
    <original>R</original>
    <variation>A</variation>
    <location>
        <position position="400"/>
    </location>
</feature>
<feature type="mutagenesis site" description="Loss of interaction with gsy-1. Partial loss of gsy-1 function." evidence="5">
    <original>W</original>
    <variation>A</variation>
    <location>
        <position position="403"/>
    </location>
</feature>
<feature type="mutagenesis site" description="Loss of interaction with gsy-1. Partial loss of gsy-1 function." evidence="5">
    <original>Y</original>
    <variation>A</variation>
    <location>
        <position position="410"/>
    </location>
</feature>
<feature type="mutagenesis site" description="Loss of interaction with gsy-1. Complete loss of gsy-1 function." evidence="5">
    <original>F</original>
    <variation>A</variation>
    <location>
        <position position="416"/>
    </location>
</feature>
<feature type="mutagenesis site" description="Loss of interaction with gsy-1. Complete loss of gsy-1 function." evidence="5">
    <original>I</original>
    <variation>A</variation>
    <location>
        <position position="419"/>
    </location>
</feature>
<feature type="mutagenesis site" description="Loss of interaction with gsy-1. Complete loss of gsy-1 function." evidence="5">
    <original>L</original>
    <variation>A</variation>
    <location>
        <position position="423"/>
    </location>
</feature>
<feature type="mutagenesis site" description="Loss of interaction with gsy-1. Partial loss of gsy-1 function." evidence="5">
    <original>L</original>
    <variation>A</variation>
    <location>
        <position position="427"/>
    </location>
</feature>
<feature type="helix" evidence="14">
    <location>
        <begin position="396"/>
        <end position="404"/>
    </location>
</feature>
<feature type="turn" evidence="14">
    <location>
        <begin position="410"/>
        <end position="414"/>
    </location>
</feature>
<feature type="helix" evidence="14">
    <location>
        <begin position="416"/>
        <end position="426"/>
    </location>
</feature>
<gene>
    <name evidence="11" type="primary">gyg-1</name>
    <name evidence="11" type="ORF">F56B6.4</name>
</gene>